<name>ASZ1_NOMLE</name>
<gene>
    <name type="primary">ASZ1</name>
    <name type="synonym">GASZ</name>
</gene>
<evidence type="ECO:0000250" key="1"/>
<evidence type="ECO:0000250" key="2">
    <source>
        <dbReference type="UniProtKB" id="Q8VD46"/>
    </source>
</evidence>
<evidence type="ECO:0000256" key="3">
    <source>
        <dbReference type="SAM" id="MobiDB-lite"/>
    </source>
</evidence>
<organism>
    <name type="scientific">Nomascus leucogenys</name>
    <name type="common">Northern white-cheeked gibbon</name>
    <name type="synonym">Hylobates leucogenys</name>
    <dbReference type="NCBI Taxonomy" id="61853"/>
    <lineage>
        <taxon>Eukaryota</taxon>
        <taxon>Metazoa</taxon>
        <taxon>Chordata</taxon>
        <taxon>Craniata</taxon>
        <taxon>Vertebrata</taxon>
        <taxon>Euteleostomi</taxon>
        <taxon>Mammalia</taxon>
        <taxon>Eutheria</taxon>
        <taxon>Euarchontoglires</taxon>
        <taxon>Primates</taxon>
        <taxon>Haplorrhini</taxon>
        <taxon>Catarrhini</taxon>
        <taxon>Hylobatidae</taxon>
        <taxon>Nomascus</taxon>
    </lineage>
</organism>
<comment type="function">
    <text evidence="1">Plays a central role during spermatogenesis by repressing transposable elements and preventing their mobilization, which is essential for the germline integrity. Acts via the piRNA metabolic process, which mediates the repression of transposable elements during meiosis by forming complexes composed of piRNAs and Piwi proteins and governs the methylation and subsequent repression of transposons. Its association with pi-bodies suggests a participation in the primary piRNAs metabolic process. Required prior to the pachytene stage to facilitate the production of multiple types of piRNAs, including those associated with repeats involved in the regulation of retrotransposons. May act by mediating protein-protein interactions during germ cell maturation (By similarity).</text>
</comment>
<comment type="subunit">
    <text evidence="1">Interacts with DDX4, PIWIL1, RANBP9 and TDRD1.</text>
</comment>
<comment type="subcellular location">
    <subcellularLocation>
        <location evidence="1">Cytoplasm</location>
    </subcellularLocation>
    <text evidence="1">Component of the meiotic nuage, also named P granule, a germ-cell-specific organelle required to repress transposon activity during meiosis. Specifically localizes to pi-bodies, a subset of the nuage which contains primary piRNAs (By similarity).</text>
</comment>
<accession>Q07DX6</accession>
<proteinExistence type="inferred from homology"/>
<dbReference type="EMBL" id="DP000194">
    <property type="protein sequence ID" value="ABJ08866.1"/>
    <property type="molecule type" value="Genomic_DNA"/>
</dbReference>
<dbReference type="RefSeq" id="XP_003261286.1">
    <property type="nucleotide sequence ID" value="XM_003261238.2"/>
</dbReference>
<dbReference type="SMR" id="Q07DX6"/>
<dbReference type="FunCoup" id="Q07DX6">
    <property type="interactions" value="24"/>
</dbReference>
<dbReference type="STRING" id="61853.ENSNLEP00000014205"/>
<dbReference type="Ensembl" id="ENSNLET00000014899.2">
    <property type="protein sequence ID" value="ENSNLEP00000014205.1"/>
    <property type="gene ID" value="ENSNLEG00000011649.2"/>
</dbReference>
<dbReference type="GeneID" id="100600913"/>
<dbReference type="KEGG" id="nle:100600913"/>
<dbReference type="CTD" id="136991"/>
<dbReference type="eggNOG" id="KOG0504">
    <property type="taxonomic scope" value="Eukaryota"/>
</dbReference>
<dbReference type="GeneTree" id="ENSGT00880000138051"/>
<dbReference type="HOGENOM" id="CLU_053259_0_0_1"/>
<dbReference type="InParanoid" id="Q07DX6"/>
<dbReference type="OMA" id="FVCKLTF"/>
<dbReference type="OrthoDB" id="439236at2759"/>
<dbReference type="TreeFam" id="TF352216"/>
<dbReference type="Proteomes" id="UP000001073">
    <property type="component" value="Chromosome 13"/>
</dbReference>
<dbReference type="GO" id="GO:0071546">
    <property type="term" value="C:pi-body"/>
    <property type="evidence" value="ECO:0000250"/>
    <property type="project" value="UniProtKB"/>
</dbReference>
<dbReference type="GO" id="GO:0030154">
    <property type="term" value="P:cell differentiation"/>
    <property type="evidence" value="ECO:0007669"/>
    <property type="project" value="UniProtKB-KW"/>
</dbReference>
<dbReference type="GO" id="GO:0007140">
    <property type="term" value="P:male meiotic nuclear division"/>
    <property type="evidence" value="ECO:0000250"/>
    <property type="project" value="UniProtKB"/>
</dbReference>
<dbReference type="GO" id="GO:0031047">
    <property type="term" value="P:regulatory ncRNA-mediated gene silencing"/>
    <property type="evidence" value="ECO:0007669"/>
    <property type="project" value="UniProtKB-KW"/>
</dbReference>
<dbReference type="GO" id="GO:0007283">
    <property type="term" value="P:spermatogenesis"/>
    <property type="evidence" value="ECO:0000250"/>
    <property type="project" value="UniProtKB"/>
</dbReference>
<dbReference type="GO" id="GO:0010526">
    <property type="term" value="P:transposable element silencing"/>
    <property type="evidence" value="ECO:0000250"/>
    <property type="project" value="UniProtKB"/>
</dbReference>
<dbReference type="CDD" id="cd09521">
    <property type="entry name" value="SAM_ASZ1"/>
    <property type="match status" value="1"/>
</dbReference>
<dbReference type="FunFam" id="1.25.40.20:FF:000192">
    <property type="entry name" value="Ankyrin repeat, SAM and basic leucine zipper domain-containing 1"/>
    <property type="match status" value="1"/>
</dbReference>
<dbReference type="FunFam" id="1.10.150.50:FF:000060">
    <property type="entry name" value="Ankyrin repeat, SAM and basic leucine zipper domain-containing protein 1"/>
    <property type="match status" value="1"/>
</dbReference>
<dbReference type="Gene3D" id="1.25.40.20">
    <property type="entry name" value="Ankyrin repeat-containing domain"/>
    <property type="match status" value="1"/>
</dbReference>
<dbReference type="Gene3D" id="1.10.150.50">
    <property type="entry name" value="Transcription Factor, Ets-1"/>
    <property type="match status" value="1"/>
</dbReference>
<dbReference type="InterPro" id="IPR002110">
    <property type="entry name" value="Ankyrin_rpt"/>
</dbReference>
<dbReference type="InterPro" id="IPR036770">
    <property type="entry name" value="Ankyrin_rpt-contain_sf"/>
</dbReference>
<dbReference type="InterPro" id="IPR042650">
    <property type="entry name" value="Asz1_SAM"/>
</dbReference>
<dbReference type="InterPro" id="IPR001660">
    <property type="entry name" value="SAM"/>
</dbReference>
<dbReference type="InterPro" id="IPR013761">
    <property type="entry name" value="SAM/pointed_sf"/>
</dbReference>
<dbReference type="PANTHER" id="PTHR24157">
    <property type="entry name" value="ANKYRIN REPEAT, SAM AND BASIC LEUCINE ZIPPER DOMAIN-CONTAINING PROTEIN 1"/>
    <property type="match status" value="1"/>
</dbReference>
<dbReference type="PANTHER" id="PTHR24157:SF3">
    <property type="entry name" value="ANKYRIN REPEAT, SAM AND BASIC LEUCINE ZIPPER DOMAIN-CONTAINING PROTEIN 1"/>
    <property type="match status" value="1"/>
</dbReference>
<dbReference type="Pfam" id="PF00023">
    <property type="entry name" value="Ank"/>
    <property type="match status" value="1"/>
</dbReference>
<dbReference type="Pfam" id="PF12796">
    <property type="entry name" value="Ank_2"/>
    <property type="match status" value="1"/>
</dbReference>
<dbReference type="Pfam" id="PF07647">
    <property type="entry name" value="SAM_2"/>
    <property type="match status" value="1"/>
</dbReference>
<dbReference type="PRINTS" id="PR01415">
    <property type="entry name" value="ANKYRIN"/>
</dbReference>
<dbReference type="SMART" id="SM00248">
    <property type="entry name" value="ANK"/>
    <property type="match status" value="5"/>
</dbReference>
<dbReference type="SUPFAM" id="SSF48403">
    <property type="entry name" value="Ankyrin repeat"/>
    <property type="match status" value="1"/>
</dbReference>
<dbReference type="SUPFAM" id="SSF140860">
    <property type="entry name" value="Pseudo ankyrin repeat-like"/>
    <property type="match status" value="1"/>
</dbReference>
<dbReference type="SUPFAM" id="SSF47769">
    <property type="entry name" value="SAM/Pointed domain"/>
    <property type="match status" value="1"/>
</dbReference>
<dbReference type="PROSITE" id="PS50297">
    <property type="entry name" value="ANK_REP_REGION"/>
    <property type="match status" value="1"/>
</dbReference>
<dbReference type="PROSITE" id="PS50088">
    <property type="entry name" value="ANK_REPEAT"/>
    <property type="match status" value="3"/>
</dbReference>
<keyword id="KW-0040">ANK repeat</keyword>
<keyword id="KW-0963">Cytoplasm</keyword>
<keyword id="KW-0217">Developmental protein</keyword>
<keyword id="KW-0221">Differentiation</keyword>
<keyword id="KW-0469">Meiosis</keyword>
<keyword id="KW-0597">Phosphoprotein</keyword>
<keyword id="KW-1185">Reference proteome</keyword>
<keyword id="KW-0677">Repeat</keyword>
<keyword id="KW-0943">RNA-mediated gene silencing</keyword>
<keyword id="KW-0744">Spermatogenesis</keyword>
<reference key="1">
    <citation type="submission" date="2006-09" db="EMBL/GenBank/DDBJ databases">
        <title>NISC comparative sequencing initiative.</title>
        <authorList>
            <person name="Antonellis A."/>
            <person name="Ayele K."/>
            <person name="Benjamin B."/>
            <person name="Blakesley R.W."/>
            <person name="Boakye A."/>
            <person name="Bouffard G.G."/>
            <person name="Brinkley C."/>
            <person name="Brooks S."/>
            <person name="Chu G."/>
            <person name="Coleman H."/>
            <person name="Engle J."/>
            <person name="Gestole M."/>
            <person name="Greene A."/>
            <person name="Guan X."/>
            <person name="Gupta J."/>
            <person name="Haghighi P."/>
            <person name="Han J."/>
            <person name="Hansen N."/>
            <person name="Ho S.-L."/>
            <person name="Hu P."/>
            <person name="Hunter G."/>
            <person name="Hurle B."/>
            <person name="Idol J.R."/>
            <person name="Kwong P."/>
            <person name="Laric P."/>
            <person name="Larson S."/>
            <person name="Lee-Lin S.-Q."/>
            <person name="Legaspi R."/>
            <person name="Madden M."/>
            <person name="Maduro Q.L."/>
            <person name="Maduro V.B."/>
            <person name="Margulies E.H."/>
            <person name="Masiello C."/>
            <person name="Maskeri B."/>
            <person name="McDowell J."/>
            <person name="Mojidi H.A."/>
            <person name="Mullikin J.C."/>
            <person name="Oestreicher J.S."/>
            <person name="Park M."/>
            <person name="Portnoy M.E."/>
            <person name="Prasad A."/>
            <person name="Puri O."/>
            <person name="Reddix-Dugue N."/>
            <person name="Schandler K."/>
            <person name="Schueler M.G."/>
            <person name="Sison C."/>
            <person name="Stantripop S."/>
            <person name="Stephen E."/>
            <person name="Taye A."/>
            <person name="Thomas J.W."/>
            <person name="Thomas P.J."/>
            <person name="Tsipouri V."/>
            <person name="Ung L."/>
            <person name="Vogt J.L."/>
            <person name="Wetherby K.D."/>
            <person name="Young A."/>
            <person name="Green E.D."/>
        </authorList>
    </citation>
    <scope>NUCLEOTIDE SEQUENCE [LARGE SCALE GENOMIC DNA]</scope>
</reference>
<protein>
    <recommendedName>
        <fullName>Ankyrin repeat, SAM and basic leucine zipper domain-containing protein 1</fullName>
    </recommendedName>
    <alternativeName>
        <fullName>Germ cell-specific ankyrin, SAM and basic leucine zipper domain-containing protein</fullName>
    </alternativeName>
</protein>
<feature type="chain" id="PRO_0000260391" description="Ankyrin repeat, SAM and basic leucine zipper domain-containing protein 1">
    <location>
        <begin position="1"/>
        <end position="475"/>
    </location>
</feature>
<feature type="repeat" description="ANK 1">
    <location>
        <begin position="45"/>
        <end position="74"/>
    </location>
</feature>
<feature type="repeat" description="ANK 2">
    <location>
        <begin position="78"/>
        <end position="107"/>
    </location>
</feature>
<feature type="repeat" description="ANK 3">
    <location>
        <begin position="110"/>
        <end position="144"/>
    </location>
</feature>
<feature type="repeat" description="ANK 4">
    <location>
        <begin position="148"/>
        <end position="177"/>
    </location>
</feature>
<feature type="repeat" description="ANK 5">
    <location>
        <begin position="181"/>
        <end position="210"/>
    </location>
</feature>
<feature type="repeat" description="ANK 6">
    <location>
        <begin position="214"/>
        <end position="243"/>
    </location>
</feature>
<feature type="domain" description="SAM">
    <location>
        <begin position="272"/>
        <end position="334"/>
    </location>
</feature>
<feature type="region of interest" description="Disordered" evidence="3">
    <location>
        <begin position="1"/>
        <end position="25"/>
    </location>
</feature>
<feature type="modified residue" description="Phosphoserine" evidence="2">
    <location>
        <position position="17"/>
    </location>
</feature>
<feature type="modified residue" description="Phosphoserine" evidence="2">
    <location>
        <position position="18"/>
    </location>
</feature>
<feature type="modified residue" description="Phosphoserine" evidence="2">
    <location>
        <position position="20"/>
    </location>
</feature>
<sequence>MAAGALRGLPVAGGGESSESEDDGWEIGYLDRTSQKLKGLLPIEEKKEKFKKAMTIGDVSLVQELLDSGISVDSTFQYGWTPLMYAASVANAELVRVLLDRGANASFEKDKQSILITACSAHGSEELILKCVELLLSRNADPNVACRRLMTPIMYAARDGHTQVVALLVAHGAEVNTQDENGYTALTWAARQGHKNIVLKLLELGANKMLQTKDGKMPSEIAKRNKHHEIFNLLSFTLNPLEGKLQQLTKEDTICKILTTDSDREKDHIFSSYTAFGDLEVFLHGLGLEHMTDLLKERDITLRHLLTMREDEFTKNGITSKDQQKILAALKELQVEEIQFGELSEETKLEISGDEFLNFLLKLNKQCGHLITAVQNVITELPVNSQKITLEWASPRNFTSVCEELVNNVEDLSEEVCKLKDLIQKLQNERENDPTHIQLREEVSTWNSRILKRTAIAVCGFGFLLFICKLTFQRK</sequence>